<protein>
    <recommendedName>
        <fullName evidence="1">Chromosomal replication initiator protein DnaA</fullName>
    </recommendedName>
</protein>
<keyword id="KW-0067">ATP-binding</keyword>
<keyword id="KW-0963">Cytoplasm</keyword>
<keyword id="KW-0235">DNA replication</keyword>
<keyword id="KW-0238">DNA-binding</keyword>
<keyword id="KW-0446">Lipid-binding</keyword>
<keyword id="KW-0547">Nucleotide-binding</keyword>
<reference key="1">
    <citation type="submission" date="2009-07" db="EMBL/GenBank/DDBJ databases">
        <title>Complete sequence of Pectobacterium carotovorum subsp. carotovorum PC1.</title>
        <authorList>
            <consortium name="US DOE Joint Genome Institute"/>
            <person name="Lucas S."/>
            <person name="Copeland A."/>
            <person name="Lapidus A."/>
            <person name="Glavina del Rio T."/>
            <person name="Tice H."/>
            <person name="Bruce D."/>
            <person name="Goodwin L."/>
            <person name="Pitluck S."/>
            <person name="Munk A.C."/>
            <person name="Brettin T."/>
            <person name="Detter J.C."/>
            <person name="Han C."/>
            <person name="Tapia R."/>
            <person name="Larimer F."/>
            <person name="Land M."/>
            <person name="Hauser L."/>
            <person name="Kyrpides N."/>
            <person name="Mikhailova N."/>
            <person name="Balakrishnan V."/>
            <person name="Glasner J."/>
            <person name="Perna N.T."/>
        </authorList>
    </citation>
    <scope>NUCLEOTIDE SEQUENCE [LARGE SCALE GENOMIC DNA]</scope>
    <source>
        <strain>PC1</strain>
    </source>
</reference>
<feature type="chain" id="PRO_1000205658" description="Chromosomal replication initiator protein DnaA">
    <location>
        <begin position="1"/>
        <end position="465"/>
    </location>
</feature>
<feature type="region of interest" description="Domain I, interacts with DnaA modulators" evidence="1">
    <location>
        <begin position="1"/>
        <end position="84"/>
    </location>
</feature>
<feature type="region of interest" description="Domain II" evidence="1">
    <location>
        <begin position="84"/>
        <end position="128"/>
    </location>
</feature>
<feature type="region of interest" description="Disordered" evidence="2">
    <location>
        <begin position="91"/>
        <end position="120"/>
    </location>
</feature>
<feature type="region of interest" description="Domain III, AAA+ region" evidence="1">
    <location>
        <begin position="129"/>
        <end position="345"/>
    </location>
</feature>
<feature type="region of interest" description="Domain IV, binds dsDNA" evidence="1">
    <location>
        <begin position="346"/>
        <end position="465"/>
    </location>
</feature>
<feature type="binding site" evidence="1">
    <location>
        <position position="173"/>
    </location>
    <ligand>
        <name>ATP</name>
        <dbReference type="ChEBI" id="CHEBI:30616"/>
    </ligand>
</feature>
<feature type="binding site" evidence="1">
    <location>
        <position position="175"/>
    </location>
    <ligand>
        <name>ATP</name>
        <dbReference type="ChEBI" id="CHEBI:30616"/>
    </ligand>
</feature>
<feature type="binding site" evidence="1">
    <location>
        <position position="176"/>
    </location>
    <ligand>
        <name>ATP</name>
        <dbReference type="ChEBI" id="CHEBI:30616"/>
    </ligand>
</feature>
<feature type="binding site" evidence="1">
    <location>
        <position position="177"/>
    </location>
    <ligand>
        <name>ATP</name>
        <dbReference type="ChEBI" id="CHEBI:30616"/>
    </ligand>
</feature>
<dbReference type="EMBL" id="CP001657">
    <property type="protein sequence ID" value="ACT11064.1"/>
    <property type="molecule type" value="Genomic_DNA"/>
</dbReference>
<dbReference type="SMR" id="C6DGH7"/>
<dbReference type="STRING" id="561230.PC1_0001"/>
<dbReference type="KEGG" id="pct:PC1_0001"/>
<dbReference type="eggNOG" id="COG0593">
    <property type="taxonomic scope" value="Bacteria"/>
</dbReference>
<dbReference type="HOGENOM" id="CLU_026910_0_1_6"/>
<dbReference type="OrthoDB" id="9807019at2"/>
<dbReference type="Proteomes" id="UP000002736">
    <property type="component" value="Chromosome"/>
</dbReference>
<dbReference type="GO" id="GO:0005737">
    <property type="term" value="C:cytoplasm"/>
    <property type="evidence" value="ECO:0007669"/>
    <property type="project" value="UniProtKB-SubCell"/>
</dbReference>
<dbReference type="GO" id="GO:0005886">
    <property type="term" value="C:plasma membrane"/>
    <property type="evidence" value="ECO:0007669"/>
    <property type="project" value="TreeGrafter"/>
</dbReference>
<dbReference type="GO" id="GO:0005524">
    <property type="term" value="F:ATP binding"/>
    <property type="evidence" value="ECO:0007669"/>
    <property type="project" value="UniProtKB-UniRule"/>
</dbReference>
<dbReference type="GO" id="GO:0016887">
    <property type="term" value="F:ATP hydrolysis activity"/>
    <property type="evidence" value="ECO:0007669"/>
    <property type="project" value="InterPro"/>
</dbReference>
<dbReference type="GO" id="GO:0003688">
    <property type="term" value="F:DNA replication origin binding"/>
    <property type="evidence" value="ECO:0007669"/>
    <property type="project" value="UniProtKB-UniRule"/>
</dbReference>
<dbReference type="GO" id="GO:0008289">
    <property type="term" value="F:lipid binding"/>
    <property type="evidence" value="ECO:0007669"/>
    <property type="project" value="UniProtKB-KW"/>
</dbReference>
<dbReference type="GO" id="GO:0006270">
    <property type="term" value="P:DNA replication initiation"/>
    <property type="evidence" value="ECO:0007669"/>
    <property type="project" value="UniProtKB-UniRule"/>
</dbReference>
<dbReference type="GO" id="GO:0006275">
    <property type="term" value="P:regulation of DNA replication"/>
    <property type="evidence" value="ECO:0007669"/>
    <property type="project" value="UniProtKB-UniRule"/>
</dbReference>
<dbReference type="CDD" id="cd00009">
    <property type="entry name" value="AAA"/>
    <property type="match status" value="1"/>
</dbReference>
<dbReference type="CDD" id="cd06571">
    <property type="entry name" value="Bac_DnaA_C"/>
    <property type="match status" value="1"/>
</dbReference>
<dbReference type="FunFam" id="1.10.1750.10:FF:000001">
    <property type="entry name" value="Chromosomal replication initiator protein DnaA"/>
    <property type="match status" value="1"/>
</dbReference>
<dbReference type="FunFam" id="1.10.8.60:FF:000003">
    <property type="entry name" value="Chromosomal replication initiator protein DnaA"/>
    <property type="match status" value="1"/>
</dbReference>
<dbReference type="FunFam" id="3.30.300.180:FF:000001">
    <property type="entry name" value="Chromosomal replication initiator protein DnaA"/>
    <property type="match status" value="1"/>
</dbReference>
<dbReference type="FunFam" id="3.40.50.300:FF:000103">
    <property type="entry name" value="Chromosomal replication initiator protein DnaA"/>
    <property type="match status" value="1"/>
</dbReference>
<dbReference type="Gene3D" id="1.10.1750.10">
    <property type="match status" value="1"/>
</dbReference>
<dbReference type="Gene3D" id="1.10.8.60">
    <property type="match status" value="1"/>
</dbReference>
<dbReference type="Gene3D" id="3.30.300.180">
    <property type="match status" value="1"/>
</dbReference>
<dbReference type="Gene3D" id="3.40.50.300">
    <property type="entry name" value="P-loop containing nucleotide triphosphate hydrolases"/>
    <property type="match status" value="1"/>
</dbReference>
<dbReference type="HAMAP" id="MF_00377">
    <property type="entry name" value="DnaA_bact"/>
    <property type="match status" value="1"/>
</dbReference>
<dbReference type="InterPro" id="IPR003593">
    <property type="entry name" value="AAA+_ATPase"/>
</dbReference>
<dbReference type="InterPro" id="IPR001957">
    <property type="entry name" value="Chromosome_initiator_DnaA"/>
</dbReference>
<dbReference type="InterPro" id="IPR020591">
    <property type="entry name" value="Chromosome_initiator_DnaA-like"/>
</dbReference>
<dbReference type="InterPro" id="IPR018312">
    <property type="entry name" value="Chromosome_initiator_DnaA_CS"/>
</dbReference>
<dbReference type="InterPro" id="IPR013159">
    <property type="entry name" value="DnaA_C"/>
</dbReference>
<dbReference type="InterPro" id="IPR013317">
    <property type="entry name" value="DnaA_dom"/>
</dbReference>
<dbReference type="InterPro" id="IPR024633">
    <property type="entry name" value="DnaA_N_dom"/>
</dbReference>
<dbReference type="InterPro" id="IPR038454">
    <property type="entry name" value="DnaA_N_sf"/>
</dbReference>
<dbReference type="InterPro" id="IPR027417">
    <property type="entry name" value="P-loop_NTPase"/>
</dbReference>
<dbReference type="InterPro" id="IPR010921">
    <property type="entry name" value="Trp_repressor/repl_initiator"/>
</dbReference>
<dbReference type="NCBIfam" id="TIGR00362">
    <property type="entry name" value="DnaA"/>
    <property type="match status" value="1"/>
</dbReference>
<dbReference type="PANTHER" id="PTHR30050">
    <property type="entry name" value="CHROMOSOMAL REPLICATION INITIATOR PROTEIN DNAA"/>
    <property type="match status" value="1"/>
</dbReference>
<dbReference type="PANTHER" id="PTHR30050:SF2">
    <property type="entry name" value="CHROMOSOMAL REPLICATION INITIATOR PROTEIN DNAA"/>
    <property type="match status" value="1"/>
</dbReference>
<dbReference type="Pfam" id="PF00308">
    <property type="entry name" value="Bac_DnaA"/>
    <property type="match status" value="1"/>
</dbReference>
<dbReference type="Pfam" id="PF08299">
    <property type="entry name" value="Bac_DnaA_C"/>
    <property type="match status" value="1"/>
</dbReference>
<dbReference type="Pfam" id="PF11638">
    <property type="entry name" value="DnaA_N"/>
    <property type="match status" value="1"/>
</dbReference>
<dbReference type="PRINTS" id="PR00051">
    <property type="entry name" value="DNAA"/>
</dbReference>
<dbReference type="SMART" id="SM00382">
    <property type="entry name" value="AAA"/>
    <property type="match status" value="1"/>
</dbReference>
<dbReference type="SMART" id="SM00760">
    <property type="entry name" value="Bac_DnaA_C"/>
    <property type="match status" value="1"/>
</dbReference>
<dbReference type="SUPFAM" id="SSF52540">
    <property type="entry name" value="P-loop containing nucleoside triphosphate hydrolases"/>
    <property type="match status" value="1"/>
</dbReference>
<dbReference type="SUPFAM" id="SSF48295">
    <property type="entry name" value="TrpR-like"/>
    <property type="match status" value="1"/>
</dbReference>
<dbReference type="PROSITE" id="PS01008">
    <property type="entry name" value="DNAA"/>
    <property type="match status" value="1"/>
</dbReference>
<organism>
    <name type="scientific">Pectobacterium carotovorum subsp. carotovorum (strain PC1)</name>
    <dbReference type="NCBI Taxonomy" id="561230"/>
    <lineage>
        <taxon>Bacteria</taxon>
        <taxon>Pseudomonadati</taxon>
        <taxon>Pseudomonadota</taxon>
        <taxon>Gammaproteobacteria</taxon>
        <taxon>Enterobacterales</taxon>
        <taxon>Pectobacteriaceae</taxon>
        <taxon>Pectobacterium</taxon>
    </lineage>
</organism>
<accession>C6DGH7</accession>
<gene>
    <name evidence="1" type="primary">dnaA</name>
    <name type="ordered locus">PC1_0001</name>
</gene>
<name>DNAA_PECCP</name>
<proteinExistence type="inferred from homology"/>
<evidence type="ECO:0000255" key="1">
    <source>
        <dbReference type="HAMAP-Rule" id="MF_00377"/>
    </source>
</evidence>
<evidence type="ECO:0000256" key="2">
    <source>
        <dbReference type="SAM" id="MobiDB-lite"/>
    </source>
</evidence>
<comment type="function">
    <text evidence="1">Plays an essential role in the initiation and regulation of chromosomal replication. ATP-DnaA binds to the origin of replication (oriC) to initiate formation of the DNA replication initiation complex once per cell cycle. Binds the DnaA box (a 9 base pair repeat at the origin) and separates the double-stranded (ds)DNA. Forms a right-handed helical filament on oriC DNA; dsDNA binds to the exterior of the filament while single-stranded (ss)DNA is stabiized in the filament's interior. The ATP-DnaA-oriC complex binds and stabilizes one strand of the AT-rich DNA unwinding element (DUE), permitting loading of DNA polymerase. After initiation quickly degrades to an ADP-DnaA complex that is not apt for DNA replication. Binds acidic phospholipids.</text>
</comment>
<comment type="subunit">
    <text evidence="1">Oligomerizes as a right-handed, spiral filament on DNA at oriC.</text>
</comment>
<comment type="subcellular location">
    <subcellularLocation>
        <location evidence="1">Cytoplasm</location>
    </subcellularLocation>
</comment>
<comment type="domain">
    <text evidence="1">Domain I is involved in oligomerization and binding regulators, domain II is flexibile and of varying length in different bacteria, domain III forms the AAA+ region, while domain IV binds dsDNA.</text>
</comment>
<comment type="similarity">
    <text evidence="1">Belongs to the DnaA family.</text>
</comment>
<sequence length="465" mass="52780">MSLSLWQQCLARLHDELPATEFSMWIRPLQAELSDNTLALYAPNRFVLDWVRDKYLNNINVLLNDFCGMDAPLLRFEVGSKPLVQAISQPAQPHHKQVSAAPQQQVRSAPVRPSWDNSPAQAEHTYRSNVNPKHTFDNFVEGKSNQLARAAARQVADNPGGAYNPLFLYGGTGLGKTHLLHAVGNGIIARKPNAKVVYMHSERFVQDMVKALQNNAIEEFKRYYRSVDALLIDDIQFFANKERSQEEFFHTFNALLEGNQQIILTSDRYPKEINGVEDRLKSRFGWGLTVAIEPPELETRVAILMKKADENDIRLPGEVAFFIAKRLRSNVRELEGALNRVIANANFTGRSITIDFVREALRDLLALQEKLVTIDNIQKTVAEYYKIKVADLLSKRRSRSVARPRQMAMALAKELTNHSLPEIGDAFGGRDHTTVLHACRKIEQLREESHDIKEDFSNLIRTLSS</sequence>